<evidence type="ECO:0000255" key="1">
    <source>
        <dbReference type="HAMAP-Rule" id="MF_00740"/>
    </source>
</evidence>
<keyword id="KW-0963">Cytoplasm</keyword>
<keyword id="KW-0413">Isomerase</keyword>
<keyword id="KW-0464">Manganese</keyword>
<keyword id="KW-0479">Metal-binding</keyword>
<dbReference type="EC" id="5.4.2.7" evidence="1"/>
<dbReference type="EMBL" id="CP001158">
    <property type="protein sequence ID" value="ACL30331.1"/>
    <property type="molecule type" value="Genomic_DNA"/>
</dbReference>
<dbReference type="RefSeq" id="WP_012619576.1">
    <property type="nucleotide sequence ID" value="NC_011834.1"/>
</dbReference>
<dbReference type="SMR" id="B8D866"/>
<dbReference type="KEGG" id="bau:BUAPTUC7_536"/>
<dbReference type="HOGENOM" id="CLU_053861_0_0_6"/>
<dbReference type="UniPathway" id="UPA00002">
    <property type="reaction ID" value="UER00467"/>
</dbReference>
<dbReference type="GO" id="GO:0005829">
    <property type="term" value="C:cytosol"/>
    <property type="evidence" value="ECO:0007669"/>
    <property type="project" value="TreeGrafter"/>
</dbReference>
<dbReference type="GO" id="GO:0000287">
    <property type="term" value="F:magnesium ion binding"/>
    <property type="evidence" value="ECO:0007669"/>
    <property type="project" value="InterPro"/>
</dbReference>
<dbReference type="GO" id="GO:0030145">
    <property type="term" value="F:manganese ion binding"/>
    <property type="evidence" value="ECO:0007669"/>
    <property type="project" value="UniProtKB-UniRule"/>
</dbReference>
<dbReference type="GO" id="GO:0008973">
    <property type="term" value="F:phosphopentomutase activity"/>
    <property type="evidence" value="ECO:0007669"/>
    <property type="project" value="UniProtKB-UniRule"/>
</dbReference>
<dbReference type="GO" id="GO:0006018">
    <property type="term" value="P:2-deoxyribose 1-phosphate catabolic process"/>
    <property type="evidence" value="ECO:0007669"/>
    <property type="project" value="UniProtKB-UniRule"/>
</dbReference>
<dbReference type="GO" id="GO:0006015">
    <property type="term" value="P:5-phosphoribose 1-diphosphate biosynthetic process"/>
    <property type="evidence" value="ECO:0007669"/>
    <property type="project" value="UniProtKB-UniPathway"/>
</dbReference>
<dbReference type="GO" id="GO:0043094">
    <property type="term" value="P:metabolic compound salvage"/>
    <property type="evidence" value="ECO:0007669"/>
    <property type="project" value="InterPro"/>
</dbReference>
<dbReference type="GO" id="GO:0009117">
    <property type="term" value="P:nucleotide metabolic process"/>
    <property type="evidence" value="ECO:0007669"/>
    <property type="project" value="InterPro"/>
</dbReference>
<dbReference type="CDD" id="cd16009">
    <property type="entry name" value="PPM"/>
    <property type="match status" value="1"/>
</dbReference>
<dbReference type="FunFam" id="3.30.70.1250:FF:000001">
    <property type="entry name" value="Phosphopentomutase"/>
    <property type="match status" value="1"/>
</dbReference>
<dbReference type="Gene3D" id="3.40.720.10">
    <property type="entry name" value="Alkaline Phosphatase, subunit A"/>
    <property type="match status" value="1"/>
</dbReference>
<dbReference type="Gene3D" id="3.30.70.1250">
    <property type="entry name" value="Phosphopentomutase"/>
    <property type="match status" value="1"/>
</dbReference>
<dbReference type="HAMAP" id="MF_00740">
    <property type="entry name" value="Phosphopentomut"/>
    <property type="match status" value="1"/>
</dbReference>
<dbReference type="InterPro" id="IPR017850">
    <property type="entry name" value="Alkaline_phosphatase_core_sf"/>
</dbReference>
<dbReference type="InterPro" id="IPR010045">
    <property type="entry name" value="DeoB"/>
</dbReference>
<dbReference type="InterPro" id="IPR006124">
    <property type="entry name" value="Metalloenzyme"/>
</dbReference>
<dbReference type="InterPro" id="IPR024052">
    <property type="entry name" value="Phosphopentomutase_DeoB_cap_sf"/>
</dbReference>
<dbReference type="NCBIfam" id="TIGR01696">
    <property type="entry name" value="deoB"/>
    <property type="match status" value="1"/>
</dbReference>
<dbReference type="NCBIfam" id="NF003766">
    <property type="entry name" value="PRK05362.1"/>
    <property type="match status" value="1"/>
</dbReference>
<dbReference type="PANTHER" id="PTHR21110">
    <property type="entry name" value="PHOSPHOPENTOMUTASE"/>
    <property type="match status" value="1"/>
</dbReference>
<dbReference type="PANTHER" id="PTHR21110:SF0">
    <property type="entry name" value="PHOSPHOPENTOMUTASE"/>
    <property type="match status" value="1"/>
</dbReference>
<dbReference type="Pfam" id="PF01676">
    <property type="entry name" value="Metalloenzyme"/>
    <property type="match status" value="1"/>
</dbReference>
<dbReference type="PIRSF" id="PIRSF001491">
    <property type="entry name" value="Ppentomutase"/>
    <property type="match status" value="1"/>
</dbReference>
<dbReference type="SUPFAM" id="SSF53649">
    <property type="entry name" value="Alkaline phosphatase-like"/>
    <property type="match status" value="1"/>
</dbReference>
<dbReference type="SUPFAM" id="SSF143856">
    <property type="entry name" value="DeoB insert domain-like"/>
    <property type="match status" value="1"/>
</dbReference>
<feature type="chain" id="PRO_1000148238" description="Phosphopentomutase">
    <location>
        <begin position="1"/>
        <end position="407"/>
    </location>
</feature>
<feature type="binding site" evidence="1">
    <location>
        <position position="10"/>
    </location>
    <ligand>
        <name>Mn(2+)</name>
        <dbReference type="ChEBI" id="CHEBI:29035"/>
        <label>1</label>
    </ligand>
</feature>
<feature type="binding site" evidence="1">
    <location>
        <position position="306"/>
    </location>
    <ligand>
        <name>Mn(2+)</name>
        <dbReference type="ChEBI" id="CHEBI:29035"/>
        <label>2</label>
    </ligand>
</feature>
<feature type="binding site" evidence="1">
    <location>
        <position position="311"/>
    </location>
    <ligand>
        <name>Mn(2+)</name>
        <dbReference type="ChEBI" id="CHEBI:29035"/>
        <label>2</label>
    </ligand>
</feature>
<feature type="binding site" evidence="1">
    <location>
        <position position="347"/>
    </location>
    <ligand>
        <name>Mn(2+)</name>
        <dbReference type="ChEBI" id="CHEBI:29035"/>
        <label>1</label>
    </ligand>
</feature>
<feature type="binding site" evidence="1">
    <location>
        <position position="348"/>
    </location>
    <ligand>
        <name>Mn(2+)</name>
        <dbReference type="ChEBI" id="CHEBI:29035"/>
        <label>1</label>
    </ligand>
</feature>
<feature type="binding site" evidence="1">
    <location>
        <position position="359"/>
    </location>
    <ligand>
        <name>Mn(2+)</name>
        <dbReference type="ChEBI" id="CHEBI:29035"/>
        <label>2</label>
    </ligand>
</feature>
<organism>
    <name type="scientific">Buchnera aphidicola subsp. Acyrthosiphon pisum (strain Tuc7)</name>
    <dbReference type="NCBI Taxonomy" id="561501"/>
    <lineage>
        <taxon>Bacteria</taxon>
        <taxon>Pseudomonadati</taxon>
        <taxon>Pseudomonadota</taxon>
        <taxon>Gammaproteobacteria</taxon>
        <taxon>Enterobacterales</taxon>
        <taxon>Erwiniaceae</taxon>
        <taxon>Buchnera</taxon>
    </lineage>
</organism>
<name>DEOB_BUCAT</name>
<reference key="1">
    <citation type="journal article" date="2009" name="Science">
        <title>The dynamics and time scale of ongoing genomic erosion in symbiotic bacteria.</title>
        <authorList>
            <person name="Moran N.A."/>
            <person name="McLaughlin H.J."/>
            <person name="Sorek R."/>
        </authorList>
    </citation>
    <scope>NUCLEOTIDE SEQUENCE [LARGE SCALE GENOMIC DNA]</scope>
    <source>
        <strain>Tuc7</strain>
    </source>
</reference>
<accession>B8D866</accession>
<protein>
    <recommendedName>
        <fullName evidence="1">Phosphopentomutase</fullName>
        <ecNumber evidence="1">5.4.2.7</ecNumber>
    </recommendedName>
    <alternativeName>
        <fullName evidence="1">Phosphodeoxyribomutase</fullName>
    </alternativeName>
</protein>
<gene>
    <name evidence="1" type="primary">deoB</name>
    <name type="ordered locus">BUAPTUC7_536</name>
</gene>
<sequence>MKRVFLIVLDSFGIGSSPDADKFNDVGSNTFGHIVEKCFLGEANVGRKGVLCIPNLVKLGIINAAKESTGQYPLGFNYSSNVIASYGFASEISSGKDTTSGHWEIAGVPVLDDWCYFKEKQNSFPESLLEKIIRRSELTGFIGNCHASGTDIISRLGEEHIQTKKPIVYTSSDSVFQIACHEEFFGLSNLYKLCKTVRFILDRYNYKVARVIARPFIGNDKLQFQRTGNRRDFSIKPFATTVIKKLIDEKQGQVIAIGKVSDIYGGIGISKNIKSTGLYELCSTTIHEMKKALNNTIVFTNLVDFDSNWGHRRDVSGYAKGLELFDSRLSEIISLVQKNDLLILTADHGCDPTWIGTDHTRENVPVLIYSPGIKKNFLGHRKTFADIGQTIAKYFLLTDMSYGQNML</sequence>
<comment type="function">
    <text evidence="1">Isomerase that catalyzes the conversion of deoxy-ribose 1-phosphate (dRib-1-P) and ribose 1-phosphate (Rib-1-P) to deoxy-ribose 5-phosphate (dRib-5-P) and ribose 5-phosphate (Rib-5-P), respectively.</text>
</comment>
<comment type="catalytic activity">
    <reaction evidence="1">
        <text>2-deoxy-alpha-D-ribose 1-phosphate = 2-deoxy-D-ribose 5-phosphate</text>
        <dbReference type="Rhea" id="RHEA:27658"/>
        <dbReference type="ChEBI" id="CHEBI:57259"/>
        <dbReference type="ChEBI" id="CHEBI:62877"/>
        <dbReference type="EC" id="5.4.2.7"/>
    </reaction>
</comment>
<comment type="catalytic activity">
    <reaction evidence="1">
        <text>alpha-D-ribose 1-phosphate = D-ribose 5-phosphate</text>
        <dbReference type="Rhea" id="RHEA:18793"/>
        <dbReference type="ChEBI" id="CHEBI:57720"/>
        <dbReference type="ChEBI" id="CHEBI:78346"/>
        <dbReference type="EC" id="5.4.2.7"/>
    </reaction>
</comment>
<comment type="cofactor">
    <cofactor evidence="1">
        <name>Mn(2+)</name>
        <dbReference type="ChEBI" id="CHEBI:29035"/>
    </cofactor>
    <text evidence="1">Binds 2 manganese ions.</text>
</comment>
<comment type="pathway">
    <text evidence="1">Carbohydrate degradation; 2-deoxy-D-ribose 1-phosphate degradation; D-glyceraldehyde 3-phosphate and acetaldehyde from 2-deoxy-alpha-D-ribose 1-phosphate: step 1/2.</text>
</comment>
<comment type="subcellular location">
    <subcellularLocation>
        <location evidence="1">Cytoplasm</location>
    </subcellularLocation>
</comment>
<comment type="similarity">
    <text evidence="1">Belongs to the phosphopentomutase family.</text>
</comment>
<proteinExistence type="inferred from homology"/>